<organism>
    <name type="scientific">Streptomyces coeruleorubidus</name>
    <dbReference type="NCBI Taxonomy" id="116188"/>
    <lineage>
        <taxon>Bacteria</taxon>
        <taxon>Bacillati</taxon>
        <taxon>Actinomycetota</taxon>
        <taxon>Actinomycetes</taxon>
        <taxon>Kitasatosporales</taxon>
        <taxon>Streptomycetaceae</taxon>
        <taxon>Streptomyces</taxon>
    </lineage>
</organism>
<evidence type="ECO:0000250" key="1">
    <source>
        <dbReference type="UniProtKB" id="P32010"/>
    </source>
</evidence>
<evidence type="ECO:0000255" key="2">
    <source>
        <dbReference type="PROSITE-ProRule" id="PRU00434"/>
    </source>
</evidence>
<evidence type="ECO:0000269" key="3">
    <source>
    </source>
</evidence>
<evidence type="ECO:0000303" key="4">
    <source>
    </source>
</evidence>
<evidence type="ECO:0000305" key="5"/>
<evidence type="ECO:0000305" key="6">
    <source>
    </source>
</evidence>
<evidence type="ECO:0000312" key="7">
    <source>
        <dbReference type="EMBL" id="WOT36399.1"/>
    </source>
</evidence>
<proteinExistence type="evidence at protein level"/>
<name>DRRA3_STRC4</name>
<gene>
    <name evidence="4" type="primary">drrA3</name>
    <name evidence="7" type="ORF">R5U08_20725</name>
</gene>
<comment type="function">
    <text evidence="3 5">Part of the ABC transporter complex DrrA3B3 involved in daunorubicin efflux (PubMed:39375957). Responsible for energy coupling to the transport system (Probable). Confers self-resistance to daunorubicin, an antibiotic produced by S.coeruleorubidus (PubMed:39375957). The efficiency of DrrA3B3 to export daunorubicin is probably lower than that of DrrA1B1 or DrrA2B2 (PubMed:39375957).</text>
</comment>
<comment type="catalytic activity">
    <reaction evidence="6">
        <text>daunorubicin(in) + ATP + H2O = daunorubicin(out) + ADP + phosphate + H(+)</text>
        <dbReference type="Rhea" id="RHEA:33147"/>
        <dbReference type="ChEBI" id="CHEBI:15377"/>
        <dbReference type="ChEBI" id="CHEBI:15378"/>
        <dbReference type="ChEBI" id="CHEBI:30616"/>
        <dbReference type="ChEBI" id="CHEBI:43474"/>
        <dbReference type="ChEBI" id="CHEBI:64677"/>
        <dbReference type="ChEBI" id="CHEBI:456216"/>
        <dbReference type="EC" id="7.6.2.2"/>
    </reaction>
    <physiologicalReaction direction="left-to-right" evidence="6">
        <dbReference type="Rhea" id="RHEA:33148"/>
    </physiologicalReaction>
</comment>
<comment type="subunit">
    <text evidence="5">The complex is probably composed of two ATP-binding proteins (DrrA3) and two transmembrane proteins (DrrB3).</text>
</comment>
<comment type="subcellular location">
    <subcellularLocation>
        <location evidence="1">Cell membrane</location>
        <topology evidence="1">Peripheral membrane protein</topology>
        <orientation evidence="1">Cytoplasmic side</orientation>
    </subcellularLocation>
</comment>
<comment type="induction">
    <text evidence="3">Exhibits high expression level.</text>
</comment>
<comment type="disruption phenotype">
    <text evidence="3">Deletion of the drrA3-drrB3 operon decreases by 79% the daunorubicin (DNR) titer in cell culture (PubMed:39375957). The drrA2-drrB2 mutant is more sensitive to DNR (PubMed:39375957). Deletion of the drrA1-drrB1, drrA2-drrB2 and drrA3-drrB3 operons almost blocks DNR production in cell culture, suggesting that disruption of these operons impairs the efflux of DNR, resulting in intracellular accumulation (PubMed:39375957).</text>
</comment>
<comment type="similarity">
    <text evidence="5">Belongs to the ABC transporter superfamily. Drug exporter-1 (DrugE1) (TC 3.A.1.105) family.</text>
</comment>
<protein>
    <recommendedName>
        <fullName evidence="5">Daunorubicin resistance ATP-binding protein DrrA3</fullName>
        <ecNumber evidence="6">7.6.2.2</ecNumber>
    </recommendedName>
</protein>
<keyword id="KW-0046">Antibiotic resistance</keyword>
<keyword id="KW-0067">ATP-binding</keyword>
<keyword id="KW-1003">Cell membrane</keyword>
<keyword id="KW-0472">Membrane</keyword>
<keyword id="KW-0547">Nucleotide-binding</keyword>
<keyword id="KW-1278">Translocase</keyword>
<keyword id="KW-0813">Transport</keyword>
<sequence>MADTAITVDGAEKRYGDKKALDGLDLRVARGTVHGVLGPNGAGKTTLVRVLSTLLRPDAGRIEVSGHDVVREAYAVRLRIGLLGQHAALDEELGGRQNLELFGRLHHLGARRARARADELLERFDLADTGRKTVRQYSGGMRRRLDLAASLITEPEVLFLDEPTTGLDPRGRAEVWDSVRSLVGGGTTVLLTTQYLEEADQLADRISVVDAGRVIAEGTADELKAETGGDRIDVVLREAGQLGAAVALLPLTGVTVDTDRRLLSAPVTDRMEALSGVVRALQEAGIEAEDVALRRPTLDEVFLHLTGDDRRVKEAA</sequence>
<accession>P0DXU7</accession>
<dbReference type="EC" id="7.6.2.2" evidence="6"/>
<dbReference type="EMBL" id="CP137524">
    <property type="protein sequence ID" value="WOT36399.1"/>
    <property type="molecule type" value="Genomic_DNA"/>
</dbReference>
<dbReference type="RefSeq" id="WP_193508236.1">
    <property type="nucleotide sequence ID" value="NZ_BMSO01000025.1"/>
</dbReference>
<dbReference type="GO" id="GO:0005886">
    <property type="term" value="C:plasma membrane"/>
    <property type="evidence" value="ECO:0007669"/>
    <property type="project" value="UniProtKB-SubCell"/>
</dbReference>
<dbReference type="GO" id="GO:0005524">
    <property type="term" value="F:ATP binding"/>
    <property type="evidence" value="ECO:0007669"/>
    <property type="project" value="UniProtKB-KW"/>
</dbReference>
<dbReference type="GO" id="GO:0016887">
    <property type="term" value="F:ATP hydrolysis activity"/>
    <property type="evidence" value="ECO:0007669"/>
    <property type="project" value="InterPro"/>
</dbReference>
<dbReference type="GO" id="GO:0043215">
    <property type="term" value="P:daunorubicin transport"/>
    <property type="evidence" value="ECO:0007669"/>
    <property type="project" value="InterPro"/>
</dbReference>
<dbReference type="GO" id="GO:1900753">
    <property type="term" value="P:doxorubicin transport"/>
    <property type="evidence" value="ECO:0007669"/>
    <property type="project" value="InterPro"/>
</dbReference>
<dbReference type="GO" id="GO:0046677">
    <property type="term" value="P:response to antibiotic"/>
    <property type="evidence" value="ECO:0007669"/>
    <property type="project" value="UniProtKB-KW"/>
</dbReference>
<dbReference type="FunFam" id="3.40.50.300:FF:000589">
    <property type="entry name" value="ABC transporter, ATP-binding subunit"/>
    <property type="match status" value="1"/>
</dbReference>
<dbReference type="Gene3D" id="3.40.50.300">
    <property type="entry name" value="P-loop containing nucleotide triphosphate hydrolases"/>
    <property type="match status" value="1"/>
</dbReference>
<dbReference type="InterPro" id="IPR003593">
    <property type="entry name" value="AAA+_ATPase"/>
</dbReference>
<dbReference type="InterPro" id="IPR003439">
    <property type="entry name" value="ABC_transporter-like_ATP-bd"/>
</dbReference>
<dbReference type="InterPro" id="IPR017871">
    <property type="entry name" value="ABC_transporter-like_CS"/>
</dbReference>
<dbReference type="InterPro" id="IPR050763">
    <property type="entry name" value="ABC_transporter_ATP-binding"/>
</dbReference>
<dbReference type="InterPro" id="IPR005894">
    <property type="entry name" value="DrrA"/>
</dbReference>
<dbReference type="InterPro" id="IPR025302">
    <property type="entry name" value="DrrA1-3-like_C"/>
</dbReference>
<dbReference type="InterPro" id="IPR027417">
    <property type="entry name" value="P-loop_NTPase"/>
</dbReference>
<dbReference type="NCBIfam" id="TIGR01188">
    <property type="entry name" value="drrA"/>
    <property type="match status" value="1"/>
</dbReference>
<dbReference type="PANTHER" id="PTHR42711">
    <property type="entry name" value="ABC TRANSPORTER ATP-BINDING PROTEIN"/>
    <property type="match status" value="1"/>
</dbReference>
<dbReference type="PANTHER" id="PTHR42711:SF19">
    <property type="entry name" value="DOXORUBICIN RESISTANCE ATP-BINDING PROTEIN DRRA"/>
    <property type="match status" value="1"/>
</dbReference>
<dbReference type="Pfam" id="PF00005">
    <property type="entry name" value="ABC_tran"/>
    <property type="match status" value="1"/>
</dbReference>
<dbReference type="Pfam" id="PF13732">
    <property type="entry name" value="DrrA1-3_C"/>
    <property type="match status" value="1"/>
</dbReference>
<dbReference type="SMART" id="SM00382">
    <property type="entry name" value="AAA"/>
    <property type="match status" value="1"/>
</dbReference>
<dbReference type="SUPFAM" id="SSF52540">
    <property type="entry name" value="P-loop containing nucleoside triphosphate hydrolases"/>
    <property type="match status" value="1"/>
</dbReference>
<dbReference type="PROSITE" id="PS00211">
    <property type="entry name" value="ABC_TRANSPORTER_1"/>
    <property type="match status" value="1"/>
</dbReference>
<dbReference type="PROSITE" id="PS50893">
    <property type="entry name" value="ABC_TRANSPORTER_2"/>
    <property type="match status" value="1"/>
</dbReference>
<feature type="chain" id="PRO_0000461853" description="Daunorubicin resistance ATP-binding protein DrrA3">
    <location>
        <begin position="1"/>
        <end position="316"/>
    </location>
</feature>
<feature type="domain" description="ABC transporter" evidence="2">
    <location>
        <begin position="6"/>
        <end position="236"/>
    </location>
</feature>
<feature type="binding site" evidence="2">
    <location>
        <begin position="38"/>
        <end position="45"/>
    </location>
    <ligand>
        <name>ATP</name>
        <dbReference type="ChEBI" id="CHEBI:30616"/>
    </ligand>
</feature>
<reference key="1">
    <citation type="submission" date="2023-10" db="EMBL/GenBank/DDBJ databases">
        <authorList>
            <person name="Guan W."/>
        </authorList>
    </citation>
    <scope>NUCLEOTIDE SEQUENCE [LARGE SCALE GENOMIC DNA]</scope>
    <source>
        <strain>CICC 11043</strain>
    </source>
</reference>
<reference key="2">
    <citation type="journal article" date="2024" name="Microb. Biotechnol.">
        <title>The involvement of multiple ABC transporters in daunorubicin efflux in Streptomyces coeruleorubidus.</title>
        <authorList>
            <person name="Dong J."/>
            <person name="Ning J."/>
            <person name="Tian Y."/>
            <person name="Li H."/>
            <person name="Chen H."/>
            <person name="Guan W."/>
        </authorList>
    </citation>
    <scope>FUNCTION IN DAUNORUBICIN EFFLUX</scope>
    <scope>INDUCTION</scope>
    <scope>DISRUPTION PHENOTYPE</scope>
</reference>